<gene>
    <name evidence="1" type="primary">cca</name>
    <name type="ordered locus">CKO_04444</name>
</gene>
<dbReference type="EC" id="2.7.7.72" evidence="1"/>
<dbReference type="EC" id="3.1.3.-" evidence="1"/>
<dbReference type="EC" id="3.1.4.-" evidence="1"/>
<dbReference type="EMBL" id="CP000822">
    <property type="protein sequence ID" value="ABV15500.1"/>
    <property type="molecule type" value="Genomic_DNA"/>
</dbReference>
<dbReference type="RefSeq" id="WP_012135183.1">
    <property type="nucleotide sequence ID" value="NC_009792.1"/>
</dbReference>
<dbReference type="SMR" id="A8APT7"/>
<dbReference type="STRING" id="290338.CKO_04444"/>
<dbReference type="GeneID" id="45138015"/>
<dbReference type="KEGG" id="cko:CKO_04444"/>
<dbReference type="HOGENOM" id="CLU_015961_1_1_6"/>
<dbReference type="OrthoDB" id="9805698at2"/>
<dbReference type="Proteomes" id="UP000008148">
    <property type="component" value="Chromosome"/>
</dbReference>
<dbReference type="GO" id="GO:0005524">
    <property type="term" value="F:ATP binding"/>
    <property type="evidence" value="ECO:0007669"/>
    <property type="project" value="UniProtKB-UniRule"/>
</dbReference>
<dbReference type="GO" id="GO:0004810">
    <property type="term" value="F:CCA tRNA nucleotidyltransferase activity"/>
    <property type="evidence" value="ECO:0007669"/>
    <property type="project" value="UniProtKB-UniRule"/>
</dbReference>
<dbReference type="GO" id="GO:0004112">
    <property type="term" value="F:cyclic-nucleotide phosphodiesterase activity"/>
    <property type="evidence" value="ECO:0007669"/>
    <property type="project" value="UniProtKB-UniRule"/>
</dbReference>
<dbReference type="GO" id="GO:0000287">
    <property type="term" value="F:magnesium ion binding"/>
    <property type="evidence" value="ECO:0007669"/>
    <property type="project" value="UniProtKB-UniRule"/>
</dbReference>
<dbReference type="GO" id="GO:0016791">
    <property type="term" value="F:phosphatase activity"/>
    <property type="evidence" value="ECO:0007669"/>
    <property type="project" value="UniProtKB-UniRule"/>
</dbReference>
<dbReference type="GO" id="GO:0000049">
    <property type="term" value="F:tRNA binding"/>
    <property type="evidence" value="ECO:0007669"/>
    <property type="project" value="UniProtKB-UniRule"/>
</dbReference>
<dbReference type="GO" id="GO:0042245">
    <property type="term" value="P:RNA repair"/>
    <property type="evidence" value="ECO:0007669"/>
    <property type="project" value="UniProtKB-KW"/>
</dbReference>
<dbReference type="GO" id="GO:0001680">
    <property type="term" value="P:tRNA 3'-terminal CCA addition"/>
    <property type="evidence" value="ECO:0007669"/>
    <property type="project" value="UniProtKB-UniRule"/>
</dbReference>
<dbReference type="CDD" id="cd00077">
    <property type="entry name" value="HDc"/>
    <property type="match status" value="1"/>
</dbReference>
<dbReference type="CDD" id="cd05398">
    <property type="entry name" value="NT_ClassII-CCAase"/>
    <property type="match status" value="1"/>
</dbReference>
<dbReference type="FunFam" id="1.10.3090.10:FF:000001">
    <property type="entry name" value="Multifunctional CCA protein"/>
    <property type="match status" value="1"/>
</dbReference>
<dbReference type="FunFam" id="3.30.460.10:FF:000016">
    <property type="entry name" value="Multifunctional CCA protein"/>
    <property type="match status" value="1"/>
</dbReference>
<dbReference type="Gene3D" id="3.30.460.10">
    <property type="entry name" value="Beta Polymerase, domain 2"/>
    <property type="match status" value="1"/>
</dbReference>
<dbReference type="Gene3D" id="1.10.3090.10">
    <property type="entry name" value="cca-adding enzyme, domain 2"/>
    <property type="match status" value="1"/>
</dbReference>
<dbReference type="HAMAP" id="MF_01261">
    <property type="entry name" value="CCA_bact_type1"/>
    <property type="match status" value="1"/>
</dbReference>
<dbReference type="HAMAP" id="MF_01262">
    <property type="entry name" value="CCA_bact_type2"/>
    <property type="match status" value="1"/>
</dbReference>
<dbReference type="InterPro" id="IPR012006">
    <property type="entry name" value="CCA_bact"/>
</dbReference>
<dbReference type="InterPro" id="IPR003607">
    <property type="entry name" value="HD/PDEase_dom"/>
</dbReference>
<dbReference type="InterPro" id="IPR006674">
    <property type="entry name" value="HD_domain"/>
</dbReference>
<dbReference type="InterPro" id="IPR043519">
    <property type="entry name" value="NT_sf"/>
</dbReference>
<dbReference type="InterPro" id="IPR002646">
    <property type="entry name" value="PolA_pol_head_dom"/>
</dbReference>
<dbReference type="InterPro" id="IPR032828">
    <property type="entry name" value="PolyA_RNA-bd"/>
</dbReference>
<dbReference type="InterPro" id="IPR050124">
    <property type="entry name" value="tRNA_CCA-adding_enzyme"/>
</dbReference>
<dbReference type="NCBIfam" id="NF008137">
    <property type="entry name" value="PRK10885.1"/>
    <property type="match status" value="1"/>
</dbReference>
<dbReference type="PANTHER" id="PTHR47545">
    <property type="entry name" value="MULTIFUNCTIONAL CCA PROTEIN"/>
    <property type="match status" value="1"/>
</dbReference>
<dbReference type="PANTHER" id="PTHR47545:SF1">
    <property type="entry name" value="MULTIFUNCTIONAL CCA PROTEIN"/>
    <property type="match status" value="1"/>
</dbReference>
<dbReference type="Pfam" id="PF01966">
    <property type="entry name" value="HD"/>
    <property type="match status" value="1"/>
</dbReference>
<dbReference type="Pfam" id="PF01743">
    <property type="entry name" value="PolyA_pol"/>
    <property type="match status" value="1"/>
</dbReference>
<dbReference type="Pfam" id="PF12627">
    <property type="entry name" value="PolyA_pol_RNAbd"/>
    <property type="match status" value="1"/>
</dbReference>
<dbReference type="PIRSF" id="PIRSF000813">
    <property type="entry name" value="CCA_bact"/>
    <property type="match status" value="1"/>
</dbReference>
<dbReference type="SUPFAM" id="SSF81301">
    <property type="entry name" value="Nucleotidyltransferase"/>
    <property type="match status" value="1"/>
</dbReference>
<dbReference type="SUPFAM" id="SSF81891">
    <property type="entry name" value="Poly A polymerase C-terminal region-like"/>
    <property type="match status" value="1"/>
</dbReference>
<dbReference type="PROSITE" id="PS51831">
    <property type="entry name" value="HD"/>
    <property type="match status" value="1"/>
</dbReference>
<comment type="function">
    <text evidence="1">Catalyzes the addition and repair of the essential 3'-terminal CCA sequence in tRNAs without using a nucleic acid template. Adds these three nucleotides in the order of C, C, and A to the tRNA nucleotide-73, using CTP and ATP as substrates and producing inorganic pyrophosphate. tRNA 3'-terminal CCA addition is required both for tRNA processing and repair. Also involved in tRNA surveillance by mediating tandem CCA addition to generate a CCACCA at the 3' terminus of unstable tRNAs. While stable tRNAs receive only 3'-terminal CCA, unstable tRNAs are marked with CCACCA and rapidly degraded.</text>
</comment>
<comment type="catalytic activity">
    <reaction evidence="1">
        <text>a tRNA precursor + 2 CTP + ATP = a tRNA with a 3' CCA end + 3 diphosphate</text>
        <dbReference type="Rhea" id="RHEA:14433"/>
        <dbReference type="Rhea" id="RHEA-COMP:10465"/>
        <dbReference type="Rhea" id="RHEA-COMP:10468"/>
        <dbReference type="ChEBI" id="CHEBI:30616"/>
        <dbReference type="ChEBI" id="CHEBI:33019"/>
        <dbReference type="ChEBI" id="CHEBI:37563"/>
        <dbReference type="ChEBI" id="CHEBI:74896"/>
        <dbReference type="ChEBI" id="CHEBI:83071"/>
        <dbReference type="EC" id="2.7.7.72"/>
    </reaction>
</comment>
<comment type="catalytic activity">
    <reaction evidence="1">
        <text>a tRNA with a 3' CCA end + 2 CTP + ATP = a tRNA with a 3' CCACCA end + 3 diphosphate</text>
        <dbReference type="Rhea" id="RHEA:76235"/>
        <dbReference type="Rhea" id="RHEA-COMP:10468"/>
        <dbReference type="Rhea" id="RHEA-COMP:18655"/>
        <dbReference type="ChEBI" id="CHEBI:30616"/>
        <dbReference type="ChEBI" id="CHEBI:33019"/>
        <dbReference type="ChEBI" id="CHEBI:37563"/>
        <dbReference type="ChEBI" id="CHEBI:83071"/>
        <dbReference type="ChEBI" id="CHEBI:195187"/>
    </reaction>
    <physiologicalReaction direction="left-to-right" evidence="1">
        <dbReference type="Rhea" id="RHEA:76236"/>
    </physiologicalReaction>
</comment>
<comment type="cofactor">
    <cofactor evidence="1">
        <name>Mg(2+)</name>
        <dbReference type="ChEBI" id="CHEBI:18420"/>
    </cofactor>
    <text evidence="1">Magnesium is required for nucleotidyltransferase activity.</text>
</comment>
<comment type="cofactor">
    <cofactor evidence="1">
        <name>Ni(2+)</name>
        <dbReference type="ChEBI" id="CHEBI:49786"/>
    </cofactor>
    <text evidence="1">Nickel for phosphatase activity.</text>
</comment>
<comment type="subunit">
    <text evidence="1">Monomer. Can also form homodimers and oligomers.</text>
</comment>
<comment type="domain">
    <text evidence="1">Comprises two domains: an N-terminal domain containing the nucleotidyltransferase activity and a C-terminal HD domain associated with both phosphodiesterase and phosphatase activities.</text>
</comment>
<comment type="miscellaneous">
    <text evidence="1">A single active site specifically recognizes both ATP and CTP and is responsible for their addition.</text>
</comment>
<comment type="similarity">
    <text evidence="1">Belongs to the tRNA nucleotidyltransferase/poly(A) polymerase family. Bacterial CCA-adding enzyme type 1 subfamily.</text>
</comment>
<evidence type="ECO:0000255" key="1">
    <source>
        <dbReference type="HAMAP-Rule" id="MF_01261"/>
    </source>
</evidence>
<name>CCA_CITK8</name>
<proteinExistence type="inferred from homology"/>
<keyword id="KW-0067">ATP-binding</keyword>
<keyword id="KW-0378">Hydrolase</keyword>
<keyword id="KW-0460">Magnesium</keyword>
<keyword id="KW-0479">Metal-binding</keyword>
<keyword id="KW-0511">Multifunctional enzyme</keyword>
<keyword id="KW-0533">Nickel</keyword>
<keyword id="KW-0547">Nucleotide-binding</keyword>
<keyword id="KW-0548">Nucleotidyltransferase</keyword>
<keyword id="KW-1185">Reference proteome</keyword>
<keyword id="KW-0692">RNA repair</keyword>
<keyword id="KW-0694">RNA-binding</keyword>
<keyword id="KW-0808">Transferase</keyword>
<keyword id="KW-0819">tRNA processing</keyword>
<feature type="chain" id="PRO_1000054260" description="Multifunctional CCA protein">
    <location>
        <begin position="1"/>
        <end position="413"/>
    </location>
</feature>
<feature type="domain" description="HD" evidence="1">
    <location>
        <begin position="228"/>
        <end position="329"/>
    </location>
</feature>
<feature type="binding site" evidence="1">
    <location>
        <position position="8"/>
    </location>
    <ligand>
        <name>ATP</name>
        <dbReference type="ChEBI" id="CHEBI:30616"/>
    </ligand>
</feature>
<feature type="binding site" evidence="1">
    <location>
        <position position="8"/>
    </location>
    <ligand>
        <name>CTP</name>
        <dbReference type="ChEBI" id="CHEBI:37563"/>
    </ligand>
</feature>
<feature type="binding site" evidence="1">
    <location>
        <position position="11"/>
    </location>
    <ligand>
        <name>ATP</name>
        <dbReference type="ChEBI" id="CHEBI:30616"/>
    </ligand>
</feature>
<feature type="binding site" evidence="1">
    <location>
        <position position="11"/>
    </location>
    <ligand>
        <name>CTP</name>
        <dbReference type="ChEBI" id="CHEBI:37563"/>
    </ligand>
</feature>
<feature type="binding site" evidence="1">
    <location>
        <position position="21"/>
    </location>
    <ligand>
        <name>Mg(2+)</name>
        <dbReference type="ChEBI" id="CHEBI:18420"/>
    </ligand>
</feature>
<feature type="binding site" evidence="1">
    <location>
        <position position="23"/>
    </location>
    <ligand>
        <name>Mg(2+)</name>
        <dbReference type="ChEBI" id="CHEBI:18420"/>
    </ligand>
</feature>
<feature type="binding site" evidence="1">
    <location>
        <position position="91"/>
    </location>
    <ligand>
        <name>ATP</name>
        <dbReference type="ChEBI" id="CHEBI:30616"/>
    </ligand>
</feature>
<feature type="binding site" evidence="1">
    <location>
        <position position="91"/>
    </location>
    <ligand>
        <name>CTP</name>
        <dbReference type="ChEBI" id="CHEBI:37563"/>
    </ligand>
</feature>
<feature type="binding site" evidence="1">
    <location>
        <position position="137"/>
    </location>
    <ligand>
        <name>ATP</name>
        <dbReference type="ChEBI" id="CHEBI:30616"/>
    </ligand>
</feature>
<feature type="binding site" evidence="1">
    <location>
        <position position="137"/>
    </location>
    <ligand>
        <name>CTP</name>
        <dbReference type="ChEBI" id="CHEBI:37563"/>
    </ligand>
</feature>
<feature type="binding site" evidence="1">
    <location>
        <position position="140"/>
    </location>
    <ligand>
        <name>ATP</name>
        <dbReference type="ChEBI" id="CHEBI:30616"/>
    </ligand>
</feature>
<feature type="binding site" evidence="1">
    <location>
        <position position="140"/>
    </location>
    <ligand>
        <name>CTP</name>
        <dbReference type="ChEBI" id="CHEBI:37563"/>
    </ligand>
</feature>
<reference key="1">
    <citation type="submission" date="2007-08" db="EMBL/GenBank/DDBJ databases">
        <authorList>
            <consortium name="The Citrobacter koseri Genome Sequencing Project"/>
            <person name="McClelland M."/>
            <person name="Sanderson E.K."/>
            <person name="Porwollik S."/>
            <person name="Spieth J."/>
            <person name="Clifton W.S."/>
            <person name="Latreille P."/>
            <person name="Courtney L."/>
            <person name="Wang C."/>
            <person name="Pepin K."/>
            <person name="Bhonagiri V."/>
            <person name="Nash W."/>
            <person name="Johnson M."/>
            <person name="Thiruvilangam P."/>
            <person name="Wilson R."/>
        </authorList>
    </citation>
    <scope>NUCLEOTIDE SEQUENCE [LARGE SCALE GENOMIC DNA]</scope>
    <source>
        <strain>ATCC BAA-895 / CDC 4225-83 / SGSC4696</strain>
    </source>
</reference>
<organism>
    <name type="scientific">Citrobacter koseri (strain ATCC BAA-895 / CDC 4225-83 / SGSC4696)</name>
    <dbReference type="NCBI Taxonomy" id="290338"/>
    <lineage>
        <taxon>Bacteria</taxon>
        <taxon>Pseudomonadati</taxon>
        <taxon>Pseudomonadota</taxon>
        <taxon>Gammaproteobacteria</taxon>
        <taxon>Enterobacterales</taxon>
        <taxon>Enterobacteriaceae</taxon>
        <taxon>Citrobacter</taxon>
    </lineage>
</organism>
<protein>
    <recommendedName>
        <fullName evidence="1">Multifunctional CCA protein</fullName>
    </recommendedName>
    <domain>
        <recommendedName>
            <fullName evidence="1">CCA-adding enzyme</fullName>
            <ecNumber evidence="1">2.7.7.72</ecNumber>
        </recommendedName>
        <alternativeName>
            <fullName evidence="1">CCA tRNA nucleotidyltransferase</fullName>
        </alternativeName>
        <alternativeName>
            <fullName evidence="1">tRNA CCA-pyrophosphorylase</fullName>
        </alternativeName>
        <alternativeName>
            <fullName evidence="1">tRNA adenylyl-/cytidylyl-transferase</fullName>
        </alternativeName>
        <alternativeName>
            <fullName evidence="1">tRNA nucleotidyltransferase</fullName>
        </alternativeName>
        <alternativeName>
            <fullName evidence="1">tRNA-NT</fullName>
        </alternativeName>
    </domain>
    <domain>
        <recommendedName>
            <fullName evidence="1">2'-nucleotidase</fullName>
            <ecNumber evidence="1">3.1.3.-</ecNumber>
        </recommendedName>
    </domain>
    <domain>
        <recommendedName>
            <fullName evidence="1">2',3'-cyclic phosphodiesterase</fullName>
            <ecNumber evidence="1">3.1.4.-</ecNumber>
        </recommendedName>
    </domain>
    <domain>
        <recommendedName>
            <fullName evidence="1">Phosphatase</fullName>
            <ecNumber evidence="1">3.1.3.-</ecNumber>
        </recommendedName>
    </domain>
</protein>
<sequence length="413" mass="46638">MKIYLVGGAVRDALLGLPVKDKDWVVVGATPQEMLDAGYQQVGRDFPVFLHPQTREEYALARTERKSGSGYTGFTCYAAPDVTLEEDLQRRDLTINALAQDDDGHIVDPYQGRRDLDNRLLRHVSPAFSEDPLRVLRVARFAARYAHLSFRIADETLALMRDMTAAGELEHLTPERVWKETENALTTRNPQVFFQVLRDCGALRVLFPEVDALFGVPAPAKWHPEIDTGIHTLMTLSMAAMLSPNVDVRFATLCHDLGKGLTPKALWPRHHGHGPAGVKLVEQLCQRLRVPNEIRDLAKLVAEFHDLIHTFPILQPKTIVKLFDSIDAWRKPQRVEQIALTSEADVRGRTGFEASDYPQGRWLREAWLVAQAVPTKEVVEAGFKGAEIREELTRRRIAAVANWKERRCPKPEA</sequence>
<accession>A8APT7</accession>